<evidence type="ECO:0000255" key="1">
    <source>
        <dbReference type="HAMAP-Rule" id="MF_03015"/>
    </source>
</evidence>
<evidence type="ECO:0000305" key="2"/>
<sequence>MSAGLETFALKEEDAIKLLACQTHVGAANCDFQMEQYVWKRRADGIHIIHLRKTWEKLLLAARAIAAIDNPGDVCVVSARPYAQRALLKFAAHTGSTPIFGRFTPGCLTNQIQKQFKEPRLLIVSDPRVDHQAVTEASYVGVPVISFCNTDSPLKFIDIAIPCNNKGVQSIGLMWWLLAREVLLIKGKMTRQTGFVLDDKEIMPDLYFYRNPEEQEKEELAEPREVKEPWPGVPPPEVAKIDEVVRSIGMYQTIGGVEPAKKLDFSMVEPVSDWAQETERAVQLDAAQQQEWGASTQNSNW</sequence>
<comment type="function">
    <text evidence="1">Required for the assembly and/or stability of the 40S ribosomal subunit. Required for the processing of the 20S rRNA-precursor to mature 18S rRNA in a late step of the maturation of 40S ribosomal subunits.</text>
</comment>
<comment type="subunit">
    <text evidence="1">Component of the small ribosomal subunit. Mature ribosomes consist of a small (40S) and a large (60S) subunit. The 40S subunit contains about 33 different proteins and 1 molecule of RNA (18S). The 60S subunit contains about 49 different proteins and 3 molecules of RNA (28S, 5.8S and 5S). Interacts with ribosomal protein S21.</text>
</comment>
<comment type="subcellular location">
    <subcellularLocation>
        <location evidence="1">Cytoplasm</location>
    </subcellularLocation>
</comment>
<comment type="similarity">
    <text evidence="1">Belongs to the universal ribosomal protein uS2 family.</text>
</comment>
<comment type="sequence caution" evidence="2">
    <conflict type="erroneous initiation">
        <sequence resource="EMBL-CDS" id="EDP31428"/>
    </conflict>
</comment>
<name>RSSA_BRUMA</name>
<accession>A8Q2H5</accession>
<reference key="1">
    <citation type="journal article" date="2007" name="Science">
        <title>Draft genome of the filarial nematode parasite Brugia malayi.</title>
        <authorList>
            <person name="Ghedin E."/>
            <person name="Wang S."/>
            <person name="Spiro D."/>
            <person name="Caler E."/>
            <person name="Zhao Q."/>
            <person name="Crabtree J."/>
            <person name="Allen J.E."/>
            <person name="Delcher A.L."/>
            <person name="Guiliano D.B."/>
            <person name="Miranda-Saavedra D."/>
            <person name="Angiuoli S.V."/>
            <person name="Creasy T."/>
            <person name="Amedeo P."/>
            <person name="Haas B."/>
            <person name="El-Sayed N.M."/>
            <person name="Wortman J.R."/>
            <person name="Feldblyum T."/>
            <person name="Tallon L."/>
            <person name="Schatz M."/>
            <person name="Shumway M."/>
            <person name="Koo H."/>
            <person name="Salzberg S.L."/>
            <person name="Schobel S."/>
            <person name="Pertea M."/>
            <person name="Pop M."/>
            <person name="White O."/>
            <person name="Barton G.J."/>
            <person name="Carlow C.K.S."/>
            <person name="Crawford M.J."/>
            <person name="Daub J."/>
            <person name="Dimmic M.W."/>
            <person name="Estes C.F."/>
            <person name="Foster J.M."/>
            <person name="Ganatra M."/>
            <person name="Gregory W.F."/>
            <person name="Johnson N.M."/>
            <person name="Jin J."/>
            <person name="Komuniecki R."/>
            <person name="Korf I."/>
            <person name="Kumar S."/>
            <person name="Laney S."/>
            <person name="Li B.-W."/>
            <person name="Li W."/>
            <person name="Lindblom T.H."/>
            <person name="Lustigman S."/>
            <person name="Ma D."/>
            <person name="Maina C.V."/>
            <person name="Martin D.M."/>
            <person name="McCarter J.P."/>
            <person name="McReynolds L."/>
            <person name="Mitreva M."/>
            <person name="Nutman T.B."/>
            <person name="Parkinson J."/>
            <person name="Peregrin-Alvarez J.M."/>
            <person name="Poole C."/>
            <person name="Ren Q."/>
            <person name="Saunders L."/>
            <person name="Sluder A.E."/>
            <person name="Smith K."/>
            <person name="Stanke M."/>
            <person name="Unnasch T.R."/>
            <person name="Ware J."/>
            <person name="Wei A.D."/>
            <person name="Weil G."/>
            <person name="Williams D.J."/>
            <person name="Zhang Y."/>
            <person name="Williams S.A."/>
            <person name="Fraser-Liggett C."/>
            <person name="Slatko B."/>
            <person name="Blaxter M.L."/>
            <person name="Scott A.L."/>
        </authorList>
    </citation>
    <scope>NUCLEOTIDE SEQUENCE [LARGE SCALE GENOMIC DNA]</scope>
</reference>
<keyword id="KW-0963">Cytoplasm</keyword>
<keyword id="KW-1185">Reference proteome</keyword>
<keyword id="KW-0687">Ribonucleoprotein</keyword>
<keyword id="KW-0689">Ribosomal protein</keyword>
<dbReference type="EMBL" id="DS239412">
    <property type="protein sequence ID" value="EDP31428.1"/>
    <property type="status" value="ALT_INIT"/>
    <property type="molecule type" value="Genomic_DNA"/>
</dbReference>
<dbReference type="SMR" id="A8Q2H5"/>
<dbReference type="FunCoup" id="A8Q2H5">
    <property type="interactions" value="1527"/>
</dbReference>
<dbReference type="STRING" id="6279.A8Q2H5"/>
<dbReference type="EnsemblMetazoa" id="Bm1783b.1">
    <property type="protein sequence ID" value="Bm1783b.1"/>
    <property type="gene ID" value="WBGene00222044"/>
</dbReference>
<dbReference type="GeneID" id="6103130"/>
<dbReference type="KEGG" id="bmy:BM_BM1783"/>
<dbReference type="CTD" id="6103130"/>
<dbReference type="WormBase" id="Bm1783b">
    <property type="protein sequence ID" value="BM31394"/>
    <property type="gene ID" value="WBGene00222044"/>
    <property type="gene designation" value="Bma-rps-0"/>
</dbReference>
<dbReference type="InParanoid" id="A8Q2H5"/>
<dbReference type="OMA" id="VKNFFEP"/>
<dbReference type="OrthoDB" id="414863at2759"/>
<dbReference type="Proteomes" id="UP000006672">
    <property type="component" value="Unassembled WGS sequence"/>
</dbReference>
<dbReference type="GO" id="GO:0022627">
    <property type="term" value="C:cytosolic small ribosomal subunit"/>
    <property type="evidence" value="ECO:0007669"/>
    <property type="project" value="UniProtKB-UniRule"/>
</dbReference>
<dbReference type="GO" id="GO:0003735">
    <property type="term" value="F:structural constituent of ribosome"/>
    <property type="evidence" value="ECO:0007669"/>
    <property type="project" value="UniProtKB-UniRule"/>
</dbReference>
<dbReference type="GO" id="GO:0000028">
    <property type="term" value="P:ribosomal small subunit assembly"/>
    <property type="evidence" value="ECO:0007669"/>
    <property type="project" value="UniProtKB-UniRule"/>
</dbReference>
<dbReference type="GO" id="GO:0006412">
    <property type="term" value="P:translation"/>
    <property type="evidence" value="ECO:0007669"/>
    <property type="project" value="UniProtKB-UniRule"/>
</dbReference>
<dbReference type="CDD" id="cd01425">
    <property type="entry name" value="RPS2"/>
    <property type="match status" value="1"/>
</dbReference>
<dbReference type="FunFam" id="3.40.50.10490:FF:000012">
    <property type="entry name" value="40S ribosomal protein SA"/>
    <property type="match status" value="1"/>
</dbReference>
<dbReference type="Gene3D" id="3.40.50.10490">
    <property type="entry name" value="Glucose-6-phosphate isomerase like protein, domain 1"/>
    <property type="match status" value="1"/>
</dbReference>
<dbReference type="HAMAP" id="MF_03015">
    <property type="entry name" value="Ribosomal_S2_euk"/>
    <property type="match status" value="1"/>
</dbReference>
<dbReference type="InterPro" id="IPR001865">
    <property type="entry name" value="Ribosomal_uS2"/>
</dbReference>
<dbReference type="InterPro" id="IPR018130">
    <property type="entry name" value="Ribosomal_uS2_CS"/>
</dbReference>
<dbReference type="InterPro" id="IPR027498">
    <property type="entry name" value="Ribosomal_uS2_euk"/>
</dbReference>
<dbReference type="InterPro" id="IPR005707">
    <property type="entry name" value="Ribosomal_uS2_euk/arc"/>
</dbReference>
<dbReference type="InterPro" id="IPR023591">
    <property type="entry name" value="Ribosomal_uS2_flav_dom_sf"/>
</dbReference>
<dbReference type="NCBIfam" id="TIGR01012">
    <property type="entry name" value="uS2_euk_arch"/>
    <property type="match status" value="1"/>
</dbReference>
<dbReference type="PANTHER" id="PTHR11489">
    <property type="entry name" value="40S RIBOSOMAL PROTEIN SA"/>
    <property type="match status" value="1"/>
</dbReference>
<dbReference type="Pfam" id="PF00318">
    <property type="entry name" value="Ribosomal_S2"/>
    <property type="match status" value="1"/>
</dbReference>
<dbReference type="PRINTS" id="PR00395">
    <property type="entry name" value="RIBOSOMALS2"/>
</dbReference>
<dbReference type="SUPFAM" id="SSF52313">
    <property type="entry name" value="Ribosomal protein S2"/>
    <property type="match status" value="1"/>
</dbReference>
<dbReference type="PROSITE" id="PS00962">
    <property type="entry name" value="RIBOSOMAL_S2_1"/>
    <property type="match status" value="1"/>
</dbReference>
<dbReference type="PROSITE" id="PS00963">
    <property type="entry name" value="RIBOSOMAL_S2_2"/>
    <property type="match status" value="1"/>
</dbReference>
<protein>
    <recommendedName>
        <fullName evidence="1">Small ribosomal subunit protein uS2</fullName>
    </recommendedName>
    <alternativeName>
        <fullName evidence="2">40S ribosomal protein SA</fullName>
    </alternativeName>
</protein>
<proteinExistence type="inferred from homology"/>
<feature type="initiator methionine" description="Removed" evidence="1">
    <location>
        <position position="1"/>
    </location>
</feature>
<feature type="chain" id="PRO_0000371597" description="Small ribosomal subunit protein uS2">
    <location>
        <begin position="2"/>
        <end position="301"/>
    </location>
</feature>
<organism>
    <name type="scientific">Brugia malayi</name>
    <name type="common">Filarial nematode worm</name>
    <dbReference type="NCBI Taxonomy" id="6279"/>
    <lineage>
        <taxon>Eukaryota</taxon>
        <taxon>Metazoa</taxon>
        <taxon>Ecdysozoa</taxon>
        <taxon>Nematoda</taxon>
        <taxon>Chromadorea</taxon>
        <taxon>Rhabditida</taxon>
        <taxon>Spirurina</taxon>
        <taxon>Spiruromorpha</taxon>
        <taxon>Filarioidea</taxon>
        <taxon>Onchocercidae</taxon>
        <taxon>Brugia</taxon>
    </lineage>
</organism>
<gene>
    <name type="ORF">Bm1_41245</name>
</gene>